<organism>
    <name type="scientific">Thermotoga maritima (strain ATCC 43589 / DSM 3109 / JCM 10099 / NBRC 100826 / MSB8)</name>
    <dbReference type="NCBI Taxonomy" id="243274"/>
    <lineage>
        <taxon>Bacteria</taxon>
        <taxon>Thermotogati</taxon>
        <taxon>Thermotogota</taxon>
        <taxon>Thermotogae</taxon>
        <taxon>Thermotogales</taxon>
        <taxon>Thermotogaceae</taxon>
        <taxon>Thermotoga</taxon>
    </lineage>
</organism>
<protein>
    <recommendedName>
        <fullName evidence="1">Membrane protein insertase YidC</fullName>
    </recommendedName>
    <alternativeName>
        <fullName evidence="1">Foldase YidC</fullName>
    </alternativeName>
    <alternativeName>
        <fullName evidence="1">Membrane integrase YidC</fullName>
    </alternativeName>
    <alternativeName>
        <fullName evidence="1">Membrane protein YidC</fullName>
    </alternativeName>
</protein>
<evidence type="ECO:0000255" key="1">
    <source>
        <dbReference type="HAMAP-Rule" id="MF_01810"/>
    </source>
</evidence>
<evidence type="ECO:0007829" key="2">
    <source>
        <dbReference type="PDB" id="5Y82"/>
    </source>
</evidence>
<evidence type="ECO:0007829" key="3">
    <source>
        <dbReference type="PDB" id="6Y86"/>
    </source>
</evidence>
<name>YIDC_THEMA</name>
<gene>
    <name evidence="1" type="primary">yidC</name>
    <name type="ordered locus">TM_1461</name>
</gene>
<feature type="chain" id="PRO_0000124760" description="Membrane protein insertase YidC">
    <location>
        <begin position="1"/>
        <end position="445"/>
    </location>
</feature>
<feature type="transmembrane region" description="Helical" evidence="1">
    <location>
        <begin position="6"/>
        <end position="26"/>
    </location>
</feature>
<feature type="transmembrane region" description="Helical" evidence="1">
    <location>
        <begin position="248"/>
        <end position="268"/>
    </location>
</feature>
<feature type="transmembrane region" description="Helical" evidence="1">
    <location>
        <begin position="313"/>
        <end position="333"/>
    </location>
</feature>
<feature type="transmembrane region" description="Helical" evidence="1">
    <location>
        <begin position="352"/>
        <end position="372"/>
    </location>
</feature>
<feature type="transmembrane region" description="Helical" evidence="1">
    <location>
        <begin position="388"/>
        <end position="408"/>
    </location>
</feature>
<feature type="helix" evidence="3">
    <location>
        <begin position="2"/>
        <end position="7"/>
    </location>
</feature>
<feature type="turn" evidence="3">
    <location>
        <begin position="8"/>
        <end position="11"/>
    </location>
</feature>
<feature type="helix" evidence="3">
    <location>
        <begin position="14"/>
        <end position="18"/>
    </location>
</feature>
<feature type="strand" evidence="2">
    <location>
        <begin position="25"/>
        <end position="28"/>
    </location>
</feature>
<feature type="strand" evidence="2">
    <location>
        <begin position="33"/>
        <end position="36"/>
    </location>
</feature>
<feature type="strand" evidence="2">
    <location>
        <begin position="38"/>
        <end position="44"/>
    </location>
</feature>
<feature type="strand" evidence="2">
    <location>
        <begin position="46"/>
        <end position="48"/>
    </location>
</feature>
<feature type="strand" evidence="2">
    <location>
        <begin position="51"/>
        <end position="56"/>
    </location>
</feature>
<feature type="strand" evidence="2">
    <location>
        <begin position="62"/>
        <end position="66"/>
    </location>
</feature>
<feature type="strand" evidence="2">
    <location>
        <begin position="74"/>
        <end position="78"/>
    </location>
</feature>
<feature type="strand" evidence="2">
    <location>
        <begin position="88"/>
        <end position="90"/>
    </location>
</feature>
<feature type="strand" evidence="2">
    <location>
        <begin position="96"/>
        <end position="98"/>
    </location>
</feature>
<feature type="strand" evidence="2">
    <location>
        <begin position="100"/>
        <end position="108"/>
    </location>
</feature>
<feature type="strand" evidence="2">
    <location>
        <begin position="110"/>
        <end position="119"/>
    </location>
</feature>
<feature type="strand" evidence="2">
    <location>
        <begin position="122"/>
        <end position="139"/>
    </location>
</feature>
<feature type="helix" evidence="2">
    <location>
        <begin position="147"/>
        <end position="149"/>
    </location>
</feature>
<feature type="strand" evidence="2">
    <location>
        <begin position="150"/>
        <end position="153"/>
    </location>
</feature>
<feature type="strand" evidence="2">
    <location>
        <begin position="156"/>
        <end position="161"/>
    </location>
</feature>
<feature type="turn" evidence="2">
    <location>
        <begin position="162"/>
        <end position="165"/>
    </location>
</feature>
<feature type="strand" evidence="2">
    <location>
        <begin position="166"/>
        <end position="171"/>
    </location>
</feature>
<feature type="strand" evidence="2">
    <location>
        <begin position="180"/>
        <end position="196"/>
    </location>
</feature>
<feature type="helix" evidence="2">
    <location>
        <begin position="199"/>
        <end position="205"/>
    </location>
</feature>
<feature type="turn" evidence="2">
    <location>
        <begin position="207"/>
        <end position="209"/>
    </location>
</feature>
<feature type="helix" evidence="2">
    <location>
        <begin position="210"/>
        <end position="217"/>
    </location>
</feature>
<feature type="turn" evidence="3">
    <location>
        <begin position="221"/>
        <end position="223"/>
    </location>
</feature>
<feature type="helix" evidence="3">
    <location>
        <begin position="228"/>
        <end position="245"/>
    </location>
</feature>
<feature type="helix" evidence="3">
    <location>
        <begin position="248"/>
        <end position="262"/>
    </location>
</feature>
<feature type="helix" evidence="3">
    <location>
        <begin position="266"/>
        <end position="279"/>
    </location>
</feature>
<feature type="helix" evidence="3">
    <location>
        <begin position="282"/>
        <end position="285"/>
    </location>
</feature>
<feature type="strand" evidence="3">
    <location>
        <begin position="294"/>
        <end position="296"/>
    </location>
</feature>
<feature type="helix" evidence="3">
    <location>
        <begin position="301"/>
        <end position="305"/>
    </location>
</feature>
<feature type="helix" evidence="3">
    <location>
        <begin position="314"/>
        <end position="333"/>
    </location>
</feature>
<feature type="helix" evidence="3">
    <location>
        <begin position="337"/>
        <end position="342"/>
    </location>
</feature>
<feature type="strand" evidence="3">
    <location>
        <begin position="346"/>
        <end position="348"/>
    </location>
</feature>
<feature type="helix" evidence="3">
    <location>
        <begin position="357"/>
        <end position="377"/>
    </location>
</feature>
<feature type="helix" evidence="3">
    <location>
        <begin position="383"/>
        <end position="392"/>
    </location>
</feature>
<feature type="helix" evidence="3">
    <location>
        <begin position="395"/>
        <end position="398"/>
    </location>
</feature>
<feature type="turn" evidence="3">
    <location>
        <begin position="399"/>
        <end position="401"/>
    </location>
</feature>
<feature type="helix" evidence="3">
    <location>
        <begin position="404"/>
        <end position="421"/>
    </location>
</feature>
<keyword id="KW-0002">3D-structure</keyword>
<keyword id="KW-0997">Cell inner membrane</keyword>
<keyword id="KW-1003">Cell membrane</keyword>
<keyword id="KW-0143">Chaperone</keyword>
<keyword id="KW-0472">Membrane</keyword>
<keyword id="KW-0653">Protein transport</keyword>
<keyword id="KW-1185">Reference proteome</keyword>
<keyword id="KW-0812">Transmembrane</keyword>
<keyword id="KW-1133">Transmembrane helix</keyword>
<keyword id="KW-0813">Transport</keyword>
<accession>Q9X1H2</accession>
<proteinExistence type="evidence at protein level"/>
<dbReference type="EMBL" id="AE000512">
    <property type="protein sequence ID" value="AAD36529.1"/>
    <property type="molecule type" value="Genomic_DNA"/>
</dbReference>
<dbReference type="PIR" id="F72251">
    <property type="entry name" value="F72251"/>
</dbReference>
<dbReference type="RefSeq" id="NP_229260.1">
    <property type="nucleotide sequence ID" value="NC_000853.1"/>
</dbReference>
<dbReference type="RefSeq" id="WP_010865347.1">
    <property type="nucleotide sequence ID" value="NC_000853.1"/>
</dbReference>
<dbReference type="PDB" id="5Y82">
    <property type="method" value="X-ray"/>
    <property type="resolution" value="2.52 A"/>
    <property type="chains" value="A/B/C/D=24-222"/>
</dbReference>
<dbReference type="PDB" id="5Y83">
    <property type="method" value="X-ray"/>
    <property type="resolution" value="3.84 A"/>
    <property type="chains" value="A=1-445"/>
</dbReference>
<dbReference type="PDB" id="6Y86">
    <property type="method" value="X-ray"/>
    <property type="resolution" value="3.40 A"/>
    <property type="chains" value="A=1-425"/>
</dbReference>
<dbReference type="PDBsum" id="5Y82"/>
<dbReference type="PDBsum" id="5Y83"/>
<dbReference type="PDBsum" id="6Y86"/>
<dbReference type="SMR" id="Q9X1H2"/>
<dbReference type="STRING" id="243274.TM_1461"/>
<dbReference type="PaxDb" id="243274-THEMA_07010"/>
<dbReference type="DNASU" id="898017"/>
<dbReference type="EnsemblBacteria" id="AAD36529">
    <property type="protein sequence ID" value="AAD36529"/>
    <property type="gene ID" value="TM_1461"/>
</dbReference>
<dbReference type="KEGG" id="tma:TM1461"/>
<dbReference type="KEGG" id="tmi:THEMA_07010"/>
<dbReference type="KEGG" id="tmm:Tmari_1467"/>
<dbReference type="eggNOG" id="COG0706">
    <property type="taxonomic scope" value="Bacteria"/>
</dbReference>
<dbReference type="InParanoid" id="Q9X1H2"/>
<dbReference type="OrthoDB" id="9780552at2"/>
<dbReference type="Proteomes" id="UP000008183">
    <property type="component" value="Chromosome"/>
</dbReference>
<dbReference type="GO" id="GO:0005886">
    <property type="term" value="C:plasma membrane"/>
    <property type="evidence" value="ECO:0000318"/>
    <property type="project" value="GO_Central"/>
</dbReference>
<dbReference type="GO" id="GO:0032977">
    <property type="term" value="F:membrane insertase activity"/>
    <property type="evidence" value="ECO:0000318"/>
    <property type="project" value="GO_Central"/>
</dbReference>
<dbReference type="GO" id="GO:0051205">
    <property type="term" value="P:protein insertion into membrane"/>
    <property type="evidence" value="ECO:0000318"/>
    <property type="project" value="GO_Central"/>
</dbReference>
<dbReference type="GO" id="GO:0015031">
    <property type="term" value="P:protein transport"/>
    <property type="evidence" value="ECO:0007669"/>
    <property type="project" value="UniProtKB-KW"/>
</dbReference>
<dbReference type="CDD" id="cd20070">
    <property type="entry name" value="5TM_YidC_Alb3"/>
    <property type="match status" value="1"/>
</dbReference>
<dbReference type="CDD" id="cd19668">
    <property type="entry name" value="TmYidC_peri"/>
    <property type="match status" value="1"/>
</dbReference>
<dbReference type="HAMAP" id="MF_01810">
    <property type="entry name" value="YidC_type1"/>
    <property type="match status" value="1"/>
</dbReference>
<dbReference type="InterPro" id="IPR019998">
    <property type="entry name" value="Membr_insert_YidC"/>
</dbReference>
<dbReference type="InterPro" id="IPR001708">
    <property type="entry name" value="YidC/ALB3/OXA1/COX18"/>
</dbReference>
<dbReference type="InterPro" id="IPR028055">
    <property type="entry name" value="YidC/Oxa/ALB_C"/>
</dbReference>
<dbReference type="InterPro" id="IPR047196">
    <property type="entry name" value="YidC_ALB_C"/>
</dbReference>
<dbReference type="NCBIfam" id="TIGR03592">
    <property type="entry name" value="yidC_oxa1_cterm"/>
    <property type="match status" value="1"/>
</dbReference>
<dbReference type="PANTHER" id="PTHR12428:SF65">
    <property type="entry name" value="CYTOCHROME C OXIDASE ASSEMBLY PROTEIN COX18, MITOCHONDRIAL"/>
    <property type="match status" value="1"/>
</dbReference>
<dbReference type="PANTHER" id="PTHR12428">
    <property type="entry name" value="OXA1"/>
    <property type="match status" value="1"/>
</dbReference>
<dbReference type="Pfam" id="PF02096">
    <property type="entry name" value="60KD_IMP"/>
    <property type="match status" value="1"/>
</dbReference>
<sequence length="445" mass="51421">MVLRKVVAILLAILPIFLFAVEPIKVVRSEKEIVVLTRFEEYHFDLEKGILKDFYTLVDGRKHVFTYGNDGFDVLDEGTPLTVIEEPIVTGVGKVSEGFSDEVSIVYNYGYVKKIFTIKNNENYTFFVDIESSKPVDVTVPRVSVDTSTDRYLENYFASFNPKTRTLVLLKHDEGLLFEGTLKVNGQKRFIVFMGPNKRTLIKKAFPEDYDVLIKALVNIPGFNKWYDSVFYGLVWFFWWLKDLTKNFGWAIMLFTLIVRLILYPLYHAQTKSLINMRKLQPQIEAIKKKYKDPTKQQEALLKLYREAGVNPASGCLMLLIQLPIFMLLWSVIRYYVEEFAYSGSFLIWKDLSAGGFSNNWLFLVITIVASYYTTLLTSQDARTAWQGIIMSVIFPFLFVGLPSGLFLYYATNTLIQLAVTYYTYKRYKIKGLTTRELLGLPKKA</sequence>
<reference key="1">
    <citation type="journal article" date="1999" name="Nature">
        <title>Evidence for lateral gene transfer between Archaea and Bacteria from genome sequence of Thermotoga maritima.</title>
        <authorList>
            <person name="Nelson K.E."/>
            <person name="Clayton R.A."/>
            <person name="Gill S.R."/>
            <person name="Gwinn M.L."/>
            <person name="Dodson R.J."/>
            <person name="Haft D.H."/>
            <person name="Hickey E.K."/>
            <person name="Peterson J.D."/>
            <person name="Nelson W.C."/>
            <person name="Ketchum K.A."/>
            <person name="McDonald L.A."/>
            <person name="Utterback T.R."/>
            <person name="Malek J.A."/>
            <person name="Linher K.D."/>
            <person name="Garrett M.M."/>
            <person name="Stewart A.M."/>
            <person name="Cotton M.D."/>
            <person name="Pratt M.S."/>
            <person name="Phillips C.A."/>
            <person name="Richardson D.L."/>
            <person name="Heidelberg J.F."/>
            <person name="Sutton G.G."/>
            <person name="Fleischmann R.D."/>
            <person name="Eisen J.A."/>
            <person name="White O."/>
            <person name="Salzberg S.L."/>
            <person name="Smith H.O."/>
            <person name="Venter J.C."/>
            <person name="Fraser C.M."/>
        </authorList>
    </citation>
    <scope>NUCLEOTIDE SEQUENCE [LARGE SCALE GENOMIC DNA]</scope>
    <source>
        <strain>ATCC 43589 / DSM 3109 / JCM 10099 / NBRC 100826 / MSB8</strain>
    </source>
</reference>
<comment type="function">
    <text evidence="1">Required for the insertion and/or proper folding and/or complex formation of integral membrane proteins into the membrane. Involved in integration of membrane proteins that insert both dependently and independently of the Sec translocase complex, as well as at least some lipoproteins. Aids folding of multispanning membrane proteins.</text>
</comment>
<comment type="subunit">
    <text evidence="1">Interacts with the Sec translocase complex via SecD. Specifically interacts with transmembrane segments of nascent integral membrane proteins during membrane integration.</text>
</comment>
<comment type="subcellular location">
    <subcellularLocation>
        <location evidence="1">Cell inner membrane</location>
        <topology evidence="1">Multi-pass membrane protein</topology>
    </subcellularLocation>
</comment>
<comment type="similarity">
    <text evidence="1">Belongs to the OXA1/ALB3/YidC family. Type 1 subfamily.</text>
</comment>